<sequence>MSDGKKTKTTVDIYGQHFTIVGEESRAHMRYVAGIVDDKMREINEKNPYLDINKLAVLTAVNVVHDYVKLQEKCEKLERQLKEKD</sequence>
<comment type="function">
    <text evidence="1 3">Activator of cell division through the inhibition of FtsZ GTPase activity, therefore promoting FtsZ assembly into bundles of protofilaments necessary for the formation of the division Z ring. It is recruited early at mid-cell but it is not essential for cell division (By similarity).</text>
</comment>
<comment type="subunit">
    <text evidence="1">Homodimer. Interacts with FtsZ (By similarity).</text>
</comment>
<comment type="interaction">
    <interactant intactId="EBI-2122911">
        <id>P94542</id>
    </interactant>
    <interactant intactId="EBI-1569853">
        <id>P17865</id>
        <label>ftsZ</label>
    </interactant>
    <organismsDiffer>false</organismsDiffer>
    <experiments>4</experiments>
</comment>
<comment type="subcellular location">
    <subcellularLocation>
        <location evidence="1">Cytoplasm</location>
    </subcellularLocation>
    <text evidence="1">Localizes at mid-cell. In sporulating cells, localizes near the cell poles (By similarity).</text>
</comment>
<comment type="similarity">
    <text evidence="4">Belongs to the ZapA family. Type 2 subfamily.</text>
</comment>
<keyword id="KW-0131">Cell cycle</keyword>
<keyword id="KW-0132">Cell division</keyword>
<keyword id="KW-0175">Coiled coil</keyword>
<keyword id="KW-0963">Cytoplasm</keyword>
<keyword id="KW-1185">Reference proteome</keyword>
<keyword id="KW-0717">Septation</keyword>
<evidence type="ECO:0000250" key="1"/>
<evidence type="ECO:0000255" key="2"/>
<evidence type="ECO:0000269" key="3">
    <source>
    </source>
</evidence>
<evidence type="ECO:0000305" key="4"/>
<proteinExistence type="evidence at protein level"/>
<organism>
    <name type="scientific">Bacillus subtilis (strain 168)</name>
    <dbReference type="NCBI Taxonomy" id="224308"/>
    <lineage>
        <taxon>Bacteria</taxon>
        <taxon>Bacillati</taxon>
        <taxon>Bacillota</taxon>
        <taxon>Bacilli</taxon>
        <taxon>Bacillales</taxon>
        <taxon>Bacillaceae</taxon>
        <taxon>Bacillus</taxon>
    </lineage>
</organism>
<feature type="chain" id="PRO_0000345674" description="Cell division protein ZapA">
    <location>
        <begin position="1"/>
        <end position="85"/>
    </location>
</feature>
<feature type="coiled-coil region" evidence="2">
    <location>
        <begin position="58"/>
        <end position="85"/>
    </location>
</feature>
<dbReference type="EMBL" id="Z75208">
    <property type="protein sequence ID" value="CAA99566.1"/>
    <property type="molecule type" value="Genomic_DNA"/>
</dbReference>
<dbReference type="EMBL" id="AL009126">
    <property type="protein sequence ID" value="CAB14821.1"/>
    <property type="molecule type" value="Genomic_DNA"/>
</dbReference>
<dbReference type="PIR" id="A69985">
    <property type="entry name" value="A69985"/>
</dbReference>
<dbReference type="RefSeq" id="NP_390739.1">
    <property type="nucleotide sequence ID" value="NC_000964.3"/>
</dbReference>
<dbReference type="RefSeq" id="WP_003229534.1">
    <property type="nucleotide sequence ID" value="NZ_OZ025638.1"/>
</dbReference>
<dbReference type="SMR" id="P94542"/>
<dbReference type="FunCoup" id="P94542">
    <property type="interactions" value="23"/>
</dbReference>
<dbReference type="IntAct" id="P94542">
    <property type="interactions" value="8"/>
</dbReference>
<dbReference type="STRING" id="224308.BSU28610"/>
<dbReference type="PaxDb" id="224308-BSU28610"/>
<dbReference type="EnsemblBacteria" id="CAB14821">
    <property type="protein sequence ID" value="CAB14821"/>
    <property type="gene ID" value="BSU_28610"/>
</dbReference>
<dbReference type="GeneID" id="86872626"/>
<dbReference type="GeneID" id="937442"/>
<dbReference type="KEGG" id="bsu:BSU28610"/>
<dbReference type="PATRIC" id="fig|224308.179.peg.3108"/>
<dbReference type="eggNOG" id="COG3027">
    <property type="taxonomic scope" value="Bacteria"/>
</dbReference>
<dbReference type="InParanoid" id="P94542"/>
<dbReference type="OrthoDB" id="9808604at2"/>
<dbReference type="PhylomeDB" id="P94542"/>
<dbReference type="BioCyc" id="BSUB:BSU28610-MONOMER"/>
<dbReference type="Proteomes" id="UP000001570">
    <property type="component" value="Chromosome"/>
</dbReference>
<dbReference type="GO" id="GO:0032153">
    <property type="term" value="C:cell division site"/>
    <property type="evidence" value="ECO:0000318"/>
    <property type="project" value="GO_Central"/>
</dbReference>
<dbReference type="GO" id="GO:0030428">
    <property type="term" value="C:cell septum"/>
    <property type="evidence" value="ECO:0000318"/>
    <property type="project" value="GO_Central"/>
</dbReference>
<dbReference type="GO" id="GO:0005829">
    <property type="term" value="C:cytosol"/>
    <property type="evidence" value="ECO:0000318"/>
    <property type="project" value="GO_Central"/>
</dbReference>
<dbReference type="GO" id="GO:0005886">
    <property type="term" value="C:plasma membrane"/>
    <property type="evidence" value="ECO:0007669"/>
    <property type="project" value="UniProtKB-UniRule"/>
</dbReference>
<dbReference type="GO" id="GO:0000917">
    <property type="term" value="P:division septum assembly"/>
    <property type="evidence" value="ECO:0000318"/>
    <property type="project" value="GO_Central"/>
</dbReference>
<dbReference type="GO" id="GO:0043093">
    <property type="term" value="P:FtsZ-dependent cytokinesis"/>
    <property type="evidence" value="ECO:0000318"/>
    <property type="project" value="GO_Central"/>
</dbReference>
<dbReference type="GO" id="GO:0000921">
    <property type="term" value="P:septin ring assembly"/>
    <property type="evidence" value="ECO:0000318"/>
    <property type="project" value="GO_Central"/>
</dbReference>
<dbReference type="Gene3D" id="6.10.250.790">
    <property type="match status" value="1"/>
</dbReference>
<dbReference type="HAMAP" id="MF_02013">
    <property type="entry name" value="ZapA_type2"/>
    <property type="match status" value="1"/>
</dbReference>
<dbReference type="InterPro" id="IPR053712">
    <property type="entry name" value="Bac_CellDiv_Activator"/>
</dbReference>
<dbReference type="InterPro" id="IPR007838">
    <property type="entry name" value="Cell_div_ZapA-like"/>
</dbReference>
<dbReference type="InterPro" id="IPR036192">
    <property type="entry name" value="Cell_div_ZapA-like_sf"/>
</dbReference>
<dbReference type="InterPro" id="IPR023688">
    <property type="entry name" value="Cell_div_ZapA_firmicutes"/>
</dbReference>
<dbReference type="NCBIfam" id="NF010724">
    <property type="entry name" value="PRK14126.1"/>
    <property type="match status" value="1"/>
</dbReference>
<dbReference type="PANTHER" id="PTHR34981">
    <property type="entry name" value="CELL DIVISION PROTEIN ZAPA"/>
    <property type="match status" value="1"/>
</dbReference>
<dbReference type="PANTHER" id="PTHR34981:SF1">
    <property type="entry name" value="CELL DIVISION PROTEIN ZAPA"/>
    <property type="match status" value="1"/>
</dbReference>
<dbReference type="Pfam" id="PF05164">
    <property type="entry name" value="ZapA"/>
    <property type="match status" value="1"/>
</dbReference>
<dbReference type="SUPFAM" id="SSF102829">
    <property type="entry name" value="Cell division protein ZapA-like"/>
    <property type="match status" value="1"/>
</dbReference>
<accession>P94542</accession>
<accession>Q795X2</accession>
<protein>
    <recommendedName>
        <fullName>Cell division protein ZapA</fullName>
    </recommendedName>
    <alternativeName>
        <fullName>Z ring-associated protein ZapA</fullName>
    </alternativeName>
</protein>
<name>ZAPA_BACSU</name>
<gene>
    <name type="primary">zapA</name>
    <name type="synonym">yshA</name>
    <name type="ordered locus">BSU28610</name>
</gene>
<reference key="1">
    <citation type="journal article" date="1996" name="Microbiology">
        <title>The dnaB-pheA (256 degrees-240 degrees) region of the Bacillus subtilis chromosome containing genes responsible for stress responses, the utilization of plant cell walls and primary metabolism.</title>
        <authorList>
            <person name="Wipat A."/>
            <person name="Carter N."/>
            <person name="Brignell C.S."/>
            <person name="Guy J.B."/>
            <person name="Piper K."/>
            <person name="Sanders J."/>
            <person name="Emmerson P.T."/>
            <person name="Harwood C.R."/>
        </authorList>
    </citation>
    <scope>NUCLEOTIDE SEQUENCE [GENOMIC DNA]</scope>
    <source>
        <strain>168</strain>
    </source>
</reference>
<reference key="2">
    <citation type="journal article" date="1997" name="Nature">
        <title>The complete genome sequence of the Gram-positive bacterium Bacillus subtilis.</title>
        <authorList>
            <person name="Kunst F."/>
            <person name="Ogasawara N."/>
            <person name="Moszer I."/>
            <person name="Albertini A.M."/>
            <person name="Alloni G."/>
            <person name="Azevedo V."/>
            <person name="Bertero M.G."/>
            <person name="Bessieres P."/>
            <person name="Bolotin A."/>
            <person name="Borchert S."/>
            <person name="Borriss R."/>
            <person name="Boursier L."/>
            <person name="Brans A."/>
            <person name="Braun M."/>
            <person name="Brignell S.C."/>
            <person name="Bron S."/>
            <person name="Brouillet S."/>
            <person name="Bruschi C.V."/>
            <person name="Caldwell B."/>
            <person name="Capuano V."/>
            <person name="Carter N.M."/>
            <person name="Choi S.-K."/>
            <person name="Codani J.-J."/>
            <person name="Connerton I.F."/>
            <person name="Cummings N.J."/>
            <person name="Daniel R.A."/>
            <person name="Denizot F."/>
            <person name="Devine K.M."/>
            <person name="Duesterhoeft A."/>
            <person name="Ehrlich S.D."/>
            <person name="Emmerson P.T."/>
            <person name="Entian K.-D."/>
            <person name="Errington J."/>
            <person name="Fabret C."/>
            <person name="Ferrari E."/>
            <person name="Foulger D."/>
            <person name="Fritz C."/>
            <person name="Fujita M."/>
            <person name="Fujita Y."/>
            <person name="Fuma S."/>
            <person name="Galizzi A."/>
            <person name="Galleron N."/>
            <person name="Ghim S.-Y."/>
            <person name="Glaser P."/>
            <person name="Goffeau A."/>
            <person name="Golightly E.J."/>
            <person name="Grandi G."/>
            <person name="Guiseppi G."/>
            <person name="Guy B.J."/>
            <person name="Haga K."/>
            <person name="Haiech J."/>
            <person name="Harwood C.R."/>
            <person name="Henaut A."/>
            <person name="Hilbert H."/>
            <person name="Holsappel S."/>
            <person name="Hosono S."/>
            <person name="Hullo M.-F."/>
            <person name="Itaya M."/>
            <person name="Jones L.-M."/>
            <person name="Joris B."/>
            <person name="Karamata D."/>
            <person name="Kasahara Y."/>
            <person name="Klaerr-Blanchard M."/>
            <person name="Klein C."/>
            <person name="Kobayashi Y."/>
            <person name="Koetter P."/>
            <person name="Koningstein G."/>
            <person name="Krogh S."/>
            <person name="Kumano M."/>
            <person name="Kurita K."/>
            <person name="Lapidus A."/>
            <person name="Lardinois S."/>
            <person name="Lauber J."/>
            <person name="Lazarevic V."/>
            <person name="Lee S.-M."/>
            <person name="Levine A."/>
            <person name="Liu H."/>
            <person name="Masuda S."/>
            <person name="Mauel C."/>
            <person name="Medigue C."/>
            <person name="Medina N."/>
            <person name="Mellado R.P."/>
            <person name="Mizuno M."/>
            <person name="Moestl D."/>
            <person name="Nakai S."/>
            <person name="Noback M."/>
            <person name="Noone D."/>
            <person name="O'Reilly M."/>
            <person name="Ogawa K."/>
            <person name="Ogiwara A."/>
            <person name="Oudega B."/>
            <person name="Park S.-H."/>
            <person name="Parro V."/>
            <person name="Pohl T.M."/>
            <person name="Portetelle D."/>
            <person name="Porwollik S."/>
            <person name="Prescott A.M."/>
            <person name="Presecan E."/>
            <person name="Pujic P."/>
            <person name="Purnelle B."/>
            <person name="Rapoport G."/>
            <person name="Rey M."/>
            <person name="Reynolds S."/>
            <person name="Rieger M."/>
            <person name="Rivolta C."/>
            <person name="Rocha E."/>
            <person name="Roche B."/>
            <person name="Rose M."/>
            <person name="Sadaie Y."/>
            <person name="Sato T."/>
            <person name="Scanlan E."/>
            <person name="Schleich S."/>
            <person name="Schroeter R."/>
            <person name="Scoffone F."/>
            <person name="Sekiguchi J."/>
            <person name="Sekowska A."/>
            <person name="Seror S.J."/>
            <person name="Serror P."/>
            <person name="Shin B.-S."/>
            <person name="Soldo B."/>
            <person name="Sorokin A."/>
            <person name="Tacconi E."/>
            <person name="Takagi T."/>
            <person name="Takahashi H."/>
            <person name="Takemaru K."/>
            <person name="Takeuchi M."/>
            <person name="Tamakoshi A."/>
            <person name="Tanaka T."/>
            <person name="Terpstra P."/>
            <person name="Tognoni A."/>
            <person name="Tosato V."/>
            <person name="Uchiyama S."/>
            <person name="Vandenbol M."/>
            <person name="Vannier F."/>
            <person name="Vassarotti A."/>
            <person name="Viari A."/>
            <person name="Wambutt R."/>
            <person name="Wedler E."/>
            <person name="Wedler H."/>
            <person name="Weitzenegger T."/>
            <person name="Winters P."/>
            <person name="Wipat A."/>
            <person name="Yamamoto H."/>
            <person name="Yamane K."/>
            <person name="Yasumoto K."/>
            <person name="Yata K."/>
            <person name="Yoshida K."/>
            <person name="Yoshikawa H.-F."/>
            <person name="Zumstein E."/>
            <person name="Yoshikawa H."/>
            <person name="Danchin A."/>
        </authorList>
    </citation>
    <scope>NUCLEOTIDE SEQUENCE [LARGE SCALE GENOMIC DNA]</scope>
    <source>
        <strain>168</strain>
    </source>
</reference>
<reference key="3">
    <citation type="journal article" date="2002" name="Genes Dev.">
        <title>A widely conserved bacterial cell division protein that promotes assembly of the tubulin-like protein FtsZ.</title>
        <authorList>
            <person name="Gueiros-Filho F.J."/>
            <person name="Losick R."/>
        </authorList>
    </citation>
    <scope>FUNCTION IN ASSEMBLY OF Z RING</scope>
    <scope>INTERACTION WITH FTSZ</scope>
    <scope>SUBUNIT</scope>
    <scope>SUBCELLULAR LOCATION</scope>
    <source>
        <strain>168 / PY79</strain>
    </source>
</reference>
<reference key="4">
    <citation type="journal article" date="2004" name="J. Bacteriol.">
        <title>Assembly dynamics of FtsZ rings in Bacillus subtilis and Escherichia coli and effects of FtsZ-regulating proteins.</title>
        <authorList>
            <person name="Anderson D.E."/>
            <person name="Gueiros-Filho F.J."/>
            <person name="Erickson H.P."/>
        </authorList>
    </citation>
    <scope>INTERACTION WITH FTSZ</scope>
    <source>
        <strain>168 / PY79</strain>
    </source>
</reference>